<organism>
    <name type="scientific">Bacillus cereus (strain 03BB102)</name>
    <dbReference type="NCBI Taxonomy" id="572264"/>
    <lineage>
        <taxon>Bacteria</taxon>
        <taxon>Bacillati</taxon>
        <taxon>Bacillota</taxon>
        <taxon>Bacilli</taxon>
        <taxon>Bacillales</taxon>
        <taxon>Bacillaceae</taxon>
        <taxon>Bacillus</taxon>
        <taxon>Bacillus cereus group</taxon>
    </lineage>
</organism>
<proteinExistence type="inferred from homology"/>
<protein>
    <recommendedName>
        <fullName evidence="1">Chromosomal replication initiator protein DnaA</fullName>
    </recommendedName>
</protein>
<gene>
    <name evidence="1" type="primary">dnaA</name>
    <name type="ordered locus">BCA_0001</name>
</gene>
<evidence type="ECO:0000255" key="1">
    <source>
        <dbReference type="HAMAP-Rule" id="MF_00377"/>
    </source>
</evidence>
<sequence>MENISDLWNSALKELEKKVSKPSYETWLKSTTAHNLKKDVLTITAPNEFARDWLESHYSELISETLYDLTGAKLAIRFIIPQSQAEEEIDLPPSKPNAAQDDSNHLPQSMLNPKYTFDTFVIGSGNRFAHAASLAVAEAPAKAYNPLFIYGGVGLGKTHLMHAIGHYVIEHNPNAKVVYLSSEKFTNEFINSIRDNKAVDFRNKYRNVDVLLIDDIQFLAGKEQTQEEFFHTFNALHEESKQIVISSDRPPKEIPTLEDRLRSRFEWGLITDITPPDLETRIAILRKKAKAEGLDIPNEVMLYIANQIDSNIRELEGALIRVVAYSSLINKDINADLAAEALKDIIPNSKPKIISIYDIQKAVGDVYQVKLEDFKAKKRTKSVAFPRQIAMYLSRELTDSSLPKIGEEFGGRDHTTVIHAHEKISKLLKTDTQLQKQVEEINDILK</sequence>
<name>DNAA_BACC3</name>
<reference key="1">
    <citation type="submission" date="2009-02" db="EMBL/GenBank/DDBJ databases">
        <title>Genome sequence of Bacillus cereus 03BB102.</title>
        <authorList>
            <person name="Dodson R.J."/>
            <person name="Jackson P."/>
            <person name="Munk A.C."/>
            <person name="Brettin T."/>
            <person name="Bruce D."/>
            <person name="Detter C."/>
            <person name="Tapia R."/>
            <person name="Han C."/>
            <person name="Sutton G."/>
            <person name="Sims D."/>
        </authorList>
    </citation>
    <scope>NUCLEOTIDE SEQUENCE [LARGE SCALE GENOMIC DNA]</scope>
    <source>
        <strain>03BB102</strain>
    </source>
</reference>
<comment type="function">
    <text evidence="1">Plays an essential role in the initiation and regulation of chromosomal replication. ATP-DnaA binds to the origin of replication (oriC) to initiate formation of the DNA replication initiation complex once per cell cycle. Binds the DnaA box (a 9 base pair repeat at the origin) and separates the double-stranded (ds)DNA. Forms a right-handed helical filament on oriC DNA; dsDNA binds to the exterior of the filament while single-stranded (ss)DNA is stabiized in the filament's interior. The ATP-DnaA-oriC complex binds and stabilizes one strand of the AT-rich DNA unwinding element (DUE), permitting loading of DNA polymerase. After initiation quickly degrades to an ADP-DnaA complex that is not apt for DNA replication. Binds acidic phospholipids.</text>
</comment>
<comment type="subunit">
    <text evidence="1">Oligomerizes as a right-handed, spiral filament on DNA at oriC.</text>
</comment>
<comment type="subcellular location">
    <subcellularLocation>
        <location evidence="1">Cytoplasm</location>
    </subcellularLocation>
</comment>
<comment type="domain">
    <text evidence="1">Domain I is involved in oligomerization and binding regulators, domain II is flexibile and of varying length in different bacteria, domain III forms the AAA+ region, while domain IV binds dsDNA.</text>
</comment>
<comment type="similarity">
    <text evidence="1">Belongs to the DnaA family.</text>
</comment>
<accession>C1ES08</accession>
<keyword id="KW-0067">ATP-binding</keyword>
<keyword id="KW-0963">Cytoplasm</keyword>
<keyword id="KW-0235">DNA replication</keyword>
<keyword id="KW-0238">DNA-binding</keyword>
<keyword id="KW-0446">Lipid-binding</keyword>
<keyword id="KW-0547">Nucleotide-binding</keyword>
<feature type="chain" id="PRO_1000189780" description="Chromosomal replication initiator protein DnaA">
    <location>
        <begin position="1"/>
        <end position="446"/>
    </location>
</feature>
<feature type="region of interest" description="Domain I, interacts with DnaA modulators" evidence="1">
    <location>
        <begin position="1"/>
        <end position="92"/>
    </location>
</feature>
<feature type="region of interest" description="Domain II" evidence="1">
    <location>
        <begin position="93"/>
        <end position="109"/>
    </location>
</feature>
<feature type="region of interest" description="Domain III, AAA+ region" evidence="1">
    <location>
        <begin position="110"/>
        <end position="326"/>
    </location>
</feature>
<feature type="region of interest" description="Domain IV, binds dsDNA" evidence="1">
    <location>
        <begin position="327"/>
        <end position="446"/>
    </location>
</feature>
<feature type="binding site" evidence="1">
    <location>
        <position position="154"/>
    </location>
    <ligand>
        <name>ATP</name>
        <dbReference type="ChEBI" id="CHEBI:30616"/>
    </ligand>
</feature>
<feature type="binding site" evidence="1">
    <location>
        <position position="156"/>
    </location>
    <ligand>
        <name>ATP</name>
        <dbReference type="ChEBI" id="CHEBI:30616"/>
    </ligand>
</feature>
<feature type="binding site" evidence="1">
    <location>
        <position position="157"/>
    </location>
    <ligand>
        <name>ATP</name>
        <dbReference type="ChEBI" id="CHEBI:30616"/>
    </ligand>
</feature>
<feature type="binding site" evidence="1">
    <location>
        <position position="158"/>
    </location>
    <ligand>
        <name>ATP</name>
        <dbReference type="ChEBI" id="CHEBI:30616"/>
    </ligand>
</feature>
<dbReference type="EMBL" id="CP001407">
    <property type="protein sequence ID" value="ACO29677.1"/>
    <property type="molecule type" value="Genomic_DNA"/>
</dbReference>
<dbReference type="RefSeq" id="WP_000428023.1">
    <property type="nucleotide sequence ID" value="NC_012472.1"/>
</dbReference>
<dbReference type="SMR" id="C1ES08"/>
<dbReference type="KEGG" id="bcx:BCA_0001"/>
<dbReference type="PATRIC" id="fig|572264.18.peg.66"/>
<dbReference type="Proteomes" id="UP000002210">
    <property type="component" value="Chromosome"/>
</dbReference>
<dbReference type="GO" id="GO:0005737">
    <property type="term" value="C:cytoplasm"/>
    <property type="evidence" value="ECO:0007669"/>
    <property type="project" value="UniProtKB-SubCell"/>
</dbReference>
<dbReference type="GO" id="GO:0005886">
    <property type="term" value="C:plasma membrane"/>
    <property type="evidence" value="ECO:0007669"/>
    <property type="project" value="TreeGrafter"/>
</dbReference>
<dbReference type="GO" id="GO:0005524">
    <property type="term" value="F:ATP binding"/>
    <property type="evidence" value="ECO:0007669"/>
    <property type="project" value="UniProtKB-UniRule"/>
</dbReference>
<dbReference type="GO" id="GO:0016887">
    <property type="term" value="F:ATP hydrolysis activity"/>
    <property type="evidence" value="ECO:0007669"/>
    <property type="project" value="InterPro"/>
</dbReference>
<dbReference type="GO" id="GO:0003688">
    <property type="term" value="F:DNA replication origin binding"/>
    <property type="evidence" value="ECO:0007669"/>
    <property type="project" value="UniProtKB-UniRule"/>
</dbReference>
<dbReference type="GO" id="GO:0008289">
    <property type="term" value="F:lipid binding"/>
    <property type="evidence" value="ECO:0007669"/>
    <property type="project" value="UniProtKB-KW"/>
</dbReference>
<dbReference type="GO" id="GO:0006270">
    <property type="term" value="P:DNA replication initiation"/>
    <property type="evidence" value="ECO:0007669"/>
    <property type="project" value="UniProtKB-UniRule"/>
</dbReference>
<dbReference type="GO" id="GO:0006275">
    <property type="term" value="P:regulation of DNA replication"/>
    <property type="evidence" value="ECO:0007669"/>
    <property type="project" value="UniProtKB-UniRule"/>
</dbReference>
<dbReference type="CDD" id="cd00009">
    <property type="entry name" value="AAA"/>
    <property type="match status" value="1"/>
</dbReference>
<dbReference type="CDD" id="cd06571">
    <property type="entry name" value="Bac_DnaA_C"/>
    <property type="match status" value="1"/>
</dbReference>
<dbReference type="FunFam" id="1.10.1750.10:FF:000003">
    <property type="entry name" value="Chromosomal replication initiator protein DnaA"/>
    <property type="match status" value="1"/>
</dbReference>
<dbReference type="FunFam" id="1.10.8.60:FF:000003">
    <property type="entry name" value="Chromosomal replication initiator protein DnaA"/>
    <property type="match status" value="1"/>
</dbReference>
<dbReference type="FunFam" id="3.30.300.180:FF:000002">
    <property type="entry name" value="Chromosomal replication initiator protein DnaA"/>
    <property type="match status" value="1"/>
</dbReference>
<dbReference type="FunFam" id="3.40.50.300:FF:000150">
    <property type="entry name" value="Chromosomal replication initiator protein DnaA"/>
    <property type="match status" value="1"/>
</dbReference>
<dbReference type="Gene3D" id="1.10.1750.10">
    <property type="match status" value="1"/>
</dbReference>
<dbReference type="Gene3D" id="1.10.8.60">
    <property type="match status" value="1"/>
</dbReference>
<dbReference type="Gene3D" id="3.30.300.180">
    <property type="match status" value="1"/>
</dbReference>
<dbReference type="Gene3D" id="3.40.50.300">
    <property type="entry name" value="P-loop containing nucleotide triphosphate hydrolases"/>
    <property type="match status" value="1"/>
</dbReference>
<dbReference type="HAMAP" id="MF_00377">
    <property type="entry name" value="DnaA_bact"/>
    <property type="match status" value="1"/>
</dbReference>
<dbReference type="InterPro" id="IPR003593">
    <property type="entry name" value="AAA+_ATPase"/>
</dbReference>
<dbReference type="InterPro" id="IPR001957">
    <property type="entry name" value="Chromosome_initiator_DnaA"/>
</dbReference>
<dbReference type="InterPro" id="IPR020591">
    <property type="entry name" value="Chromosome_initiator_DnaA-like"/>
</dbReference>
<dbReference type="InterPro" id="IPR018312">
    <property type="entry name" value="Chromosome_initiator_DnaA_CS"/>
</dbReference>
<dbReference type="InterPro" id="IPR013159">
    <property type="entry name" value="DnaA_C"/>
</dbReference>
<dbReference type="InterPro" id="IPR013317">
    <property type="entry name" value="DnaA_dom"/>
</dbReference>
<dbReference type="InterPro" id="IPR024633">
    <property type="entry name" value="DnaA_N_dom"/>
</dbReference>
<dbReference type="InterPro" id="IPR038454">
    <property type="entry name" value="DnaA_N_sf"/>
</dbReference>
<dbReference type="InterPro" id="IPR027417">
    <property type="entry name" value="P-loop_NTPase"/>
</dbReference>
<dbReference type="InterPro" id="IPR010921">
    <property type="entry name" value="Trp_repressor/repl_initiator"/>
</dbReference>
<dbReference type="NCBIfam" id="TIGR00362">
    <property type="entry name" value="DnaA"/>
    <property type="match status" value="1"/>
</dbReference>
<dbReference type="NCBIfam" id="NF010686">
    <property type="entry name" value="PRK14086.1"/>
    <property type="match status" value="1"/>
</dbReference>
<dbReference type="PANTHER" id="PTHR30050">
    <property type="entry name" value="CHROMOSOMAL REPLICATION INITIATOR PROTEIN DNAA"/>
    <property type="match status" value="1"/>
</dbReference>
<dbReference type="PANTHER" id="PTHR30050:SF2">
    <property type="entry name" value="CHROMOSOMAL REPLICATION INITIATOR PROTEIN DNAA"/>
    <property type="match status" value="1"/>
</dbReference>
<dbReference type="Pfam" id="PF00308">
    <property type="entry name" value="Bac_DnaA"/>
    <property type="match status" value="1"/>
</dbReference>
<dbReference type="Pfam" id="PF08299">
    <property type="entry name" value="Bac_DnaA_C"/>
    <property type="match status" value="1"/>
</dbReference>
<dbReference type="Pfam" id="PF11638">
    <property type="entry name" value="DnaA_N"/>
    <property type="match status" value="1"/>
</dbReference>
<dbReference type="PRINTS" id="PR00051">
    <property type="entry name" value="DNAA"/>
</dbReference>
<dbReference type="SMART" id="SM00382">
    <property type="entry name" value="AAA"/>
    <property type="match status" value="1"/>
</dbReference>
<dbReference type="SMART" id="SM00760">
    <property type="entry name" value="Bac_DnaA_C"/>
    <property type="match status" value="1"/>
</dbReference>
<dbReference type="SUPFAM" id="SSF52540">
    <property type="entry name" value="P-loop containing nucleoside triphosphate hydrolases"/>
    <property type="match status" value="1"/>
</dbReference>
<dbReference type="SUPFAM" id="SSF48295">
    <property type="entry name" value="TrpR-like"/>
    <property type="match status" value="1"/>
</dbReference>
<dbReference type="PROSITE" id="PS01008">
    <property type="entry name" value="DNAA"/>
    <property type="match status" value="1"/>
</dbReference>